<feature type="chain" id="PRO_1000090698" description="Ribosome-recycling factor">
    <location>
        <begin position="1"/>
        <end position="184"/>
    </location>
</feature>
<comment type="function">
    <text evidence="1">Responsible for the release of ribosomes from messenger RNA at the termination of protein biosynthesis. May increase the efficiency of translation by recycling ribosomes from one round of translation to another.</text>
</comment>
<comment type="subcellular location">
    <subcellularLocation>
        <location evidence="1">Cytoplasm</location>
    </subcellularLocation>
</comment>
<comment type="similarity">
    <text evidence="1">Belongs to the RRF family.</text>
</comment>
<accession>A3M657</accession>
<protein>
    <recommendedName>
        <fullName evidence="1">Ribosome-recycling factor</fullName>
        <shortName evidence="1">RRF</shortName>
    </recommendedName>
    <alternativeName>
        <fullName evidence="1">Ribosome-releasing factor</fullName>
    </alternativeName>
</protein>
<keyword id="KW-0963">Cytoplasm</keyword>
<keyword id="KW-0648">Protein biosynthesis</keyword>
<name>RRF_ACIBT</name>
<evidence type="ECO:0000255" key="1">
    <source>
        <dbReference type="HAMAP-Rule" id="MF_00040"/>
    </source>
</evidence>
<sequence>MINDLKKDSEQRMLKTLESLEQGFAKVRTGRAHPSILNGVMVPYYGSDVPLNQVANVGVEDSRTLIVQPFERTMVAAIDKAIRESDLGLNPITADSIRVPLPALTEETRRDMQKIARSEAENAKVAIRNIRRDVLGDIKALLKEKEISEDDERRAGDDIQKITDKYVAEVDKRLAAKEAELMKV</sequence>
<gene>
    <name evidence="1" type="primary">frr</name>
    <name type="ordered locus">A1S_1974</name>
</gene>
<dbReference type="EMBL" id="CP000521">
    <property type="protein sequence ID" value="ABO12401.2"/>
    <property type="molecule type" value="Genomic_DNA"/>
</dbReference>
<dbReference type="RefSeq" id="WP_000606428.1">
    <property type="nucleotide sequence ID" value="NZ_CP053098.1"/>
</dbReference>
<dbReference type="SMR" id="A3M657"/>
<dbReference type="GeneID" id="92894236"/>
<dbReference type="KEGG" id="acb:A1S_1974"/>
<dbReference type="HOGENOM" id="CLU_073981_2_1_6"/>
<dbReference type="GO" id="GO:0005829">
    <property type="term" value="C:cytosol"/>
    <property type="evidence" value="ECO:0007669"/>
    <property type="project" value="GOC"/>
</dbReference>
<dbReference type="GO" id="GO:0043023">
    <property type="term" value="F:ribosomal large subunit binding"/>
    <property type="evidence" value="ECO:0007669"/>
    <property type="project" value="TreeGrafter"/>
</dbReference>
<dbReference type="GO" id="GO:0002184">
    <property type="term" value="P:cytoplasmic translational termination"/>
    <property type="evidence" value="ECO:0007669"/>
    <property type="project" value="TreeGrafter"/>
</dbReference>
<dbReference type="CDD" id="cd00520">
    <property type="entry name" value="RRF"/>
    <property type="match status" value="1"/>
</dbReference>
<dbReference type="FunFam" id="1.10.132.20:FF:000001">
    <property type="entry name" value="Ribosome-recycling factor"/>
    <property type="match status" value="1"/>
</dbReference>
<dbReference type="FunFam" id="3.30.1360.40:FF:000001">
    <property type="entry name" value="Ribosome-recycling factor"/>
    <property type="match status" value="1"/>
</dbReference>
<dbReference type="Gene3D" id="3.30.1360.40">
    <property type="match status" value="1"/>
</dbReference>
<dbReference type="Gene3D" id="1.10.132.20">
    <property type="entry name" value="Ribosome-recycling factor"/>
    <property type="match status" value="1"/>
</dbReference>
<dbReference type="HAMAP" id="MF_00040">
    <property type="entry name" value="RRF"/>
    <property type="match status" value="1"/>
</dbReference>
<dbReference type="InterPro" id="IPR002661">
    <property type="entry name" value="Ribosome_recyc_fac"/>
</dbReference>
<dbReference type="InterPro" id="IPR023584">
    <property type="entry name" value="Ribosome_recyc_fac_dom"/>
</dbReference>
<dbReference type="InterPro" id="IPR036191">
    <property type="entry name" value="RRF_sf"/>
</dbReference>
<dbReference type="NCBIfam" id="TIGR00496">
    <property type="entry name" value="frr"/>
    <property type="match status" value="1"/>
</dbReference>
<dbReference type="PANTHER" id="PTHR20982:SF3">
    <property type="entry name" value="MITOCHONDRIAL RIBOSOME RECYCLING FACTOR PSEUDO 1"/>
    <property type="match status" value="1"/>
</dbReference>
<dbReference type="PANTHER" id="PTHR20982">
    <property type="entry name" value="RIBOSOME RECYCLING FACTOR"/>
    <property type="match status" value="1"/>
</dbReference>
<dbReference type="Pfam" id="PF01765">
    <property type="entry name" value="RRF"/>
    <property type="match status" value="1"/>
</dbReference>
<dbReference type="SUPFAM" id="SSF55194">
    <property type="entry name" value="Ribosome recycling factor, RRF"/>
    <property type="match status" value="1"/>
</dbReference>
<proteinExistence type="inferred from homology"/>
<organism>
    <name type="scientific">Acinetobacter baumannii (strain ATCC 17978 / DSM 105126 / CIP 53.77 / LMG 1025 / NCDC KC755 / 5377)</name>
    <dbReference type="NCBI Taxonomy" id="400667"/>
    <lineage>
        <taxon>Bacteria</taxon>
        <taxon>Pseudomonadati</taxon>
        <taxon>Pseudomonadota</taxon>
        <taxon>Gammaproteobacteria</taxon>
        <taxon>Moraxellales</taxon>
        <taxon>Moraxellaceae</taxon>
        <taxon>Acinetobacter</taxon>
        <taxon>Acinetobacter calcoaceticus/baumannii complex</taxon>
    </lineage>
</organism>
<reference key="1">
    <citation type="journal article" date="2007" name="Genes Dev.">
        <title>New insights into Acinetobacter baumannii pathogenesis revealed by high-density pyrosequencing and transposon mutagenesis.</title>
        <authorList>
            <person name="Smith M.G."/>
            <person name="Gianoulis T.A."/>
            <person name="Pukatzki S."/>
            <person name="Mekalanos J.J."/>
            <person name="Ornston L.N."/>
            <person name="Gerstein M."/>
            <person name="Snyder M."/>
        </authorList>
    </citation>
    <scope>NUCLEOTIDE SEQUENCE [LARGE SCALE GENOMIC DNA]</scope>
    <source>
        <strain>ATCC 17978 / DSM 105126 / CIP 53.77 / LMG 1025 / NCDC KC755 / 5377</strain>
    </source>
</reference>